<name>CYC2_PARPM</name>
<comment type="function">
    <text>Cytochrome c2 is found mainly in purple, non-sulfur, photosynthetic bacteria where it functions as the electron donor to the oxidized bacteriochlorophyll in the photophosphorylation pathway. However, it may also have a role in the respiratory chain and is found in some non-photosynthetic bacteria.</text>
</comment>
<comment type="PTM">
    <text evidence="1">Binds 1 heme c group covalently per subunit.</text>
</comment>
<comment type="similarity">
    <text evidence="3">Belongs to the cytochrome c family.</text>
</comment>
<comment type="caution">
    <text evidence="3">There may be an additional Gly residue between Lys-59 and Gly-60.</text>
</comment>
<sequence length="113" mass="12069">AGDAAVGEKIAKAKCTACHDLNKGGPIKVGPPLFGVFGRTTGTFAGYSYSPGYTVMGQKGHTWDDNALKAYLLDPKGYVQAKSGDPKANSKMIFRLEKDDDVANVIAYLHTMK</sequence>
<dbReference type="PIR" id="A00085">
    <property type="entry name" value="CCQF2P"/>
</dbReference>
<dbReference type="SMR" id="P00093"/>
<dbReference type="GO" id="GO:0009055">
    <property type="term" value="F:electron transfer activity"/>
    <property type="evidence" value="ECO:0007669"/>
    <property type="project" value="InterPro"/>
</dbReference>
<dbReference type="GO" id="GO:0020037">
    <property type="term" value="F:heme binding"/>
    <property type="evidence" value="ECO:0007669"/>
    <property type="project" value="InterPro"/>
</dbReference>
<dbReference type="GO" id="GO:0046872">
    <property type="term" value="F:metal ion binding"/>
    <property type="evidence" value="ECO:0007669"/>
    <property type="project" value="UniProtKB-KW"/>
</dbReference>
<dbReference type="GO" id="GO:0015979">
    <property type="term" value="P:photosynthesis"/>
    <property type="evidence" value="ECO:0007669"/>
    <property type="project" value="UniProtKB-KW"/>
</dbReference>
<dbReference type="Gene3D" id="1.10.760.10">
    <property type="entry name" value="Cytochrome c-like domain"/>
    <property type="match status" value="1"/>
</dbReference>
<dbReference type="InterPro" id="IPR009056">
    <property type="entry name" value="Cyt_c-like_dom"/>
</dbReference>
<dbReference type="InterPro" id="IPR036909">
    <property type="entry name" value="Cyt_c-like_dom_sf"/>
</dbReference>
<dbReference type="InterPro" id="IPR002327">
    <property type="entry name" value="Cyt_c_1A/1B"/>
</dbReference>
<dbReference type="PANTHER" id="PTHR11961">
    <property type="entry name" value="CYTOCHROME C"/>
    <property type="match status" value="1"/>
</dbReference>
<dbReference type="Pfam" id="PF00034">
    <property type="entry name" value="Cytochrom_C"/>
    <property type="match status" value="1"/>
</dbReference>
<dbReference type="PRINTS" id="PR00604">
    <property type="entry name" value="CYTCHRMECIAB"/>
</dbReference>
<dbReference type="SUPFAM" id="SSF46626">
    <property type="entry name" value="Cytochrome c"/>
    <property type="match status" value="1"/>
</dbReference>
<dbReference type="PROSITE" id="PS51007">
    <property type="entry name" value="CYTC"/>
    <property type="match status" value="1"/>
</dbReference>
<reference key="1">
    <citation type="journal article" date="1979" name="Nature">
        <title>Cytochrome c2 sequence variation among the recognised species of purple nonsulphur photosynthetic bacteria.</title>
        <authorList>
            <person name="Ambler R.P."/>
            <person name="Daniel M."/>
            <person name="Hermoso J."/>
            <person name="Meyer T.E."/>
            <person name="Bartsch R.G."/>
            <person name="Kamen M.D."/>
        </authorList>
    </citation>
    <scope>PROTEIN SEQUENCE</scope>
    <source>
        <strain>SP113</strain>
    </source>
</reference>
<reference key="2">
    <citation type="submission" date="1977-06" db="PIR data bank">
        <authorList>
            <person name="Ambler R.P."/>
        </authorList>
    </citation>
    <scope>PROTEIN SEQUENCE</scope>
</reference>
<evidence type="ECO:0000250" key="1"/>
<evidence type="ECO:0000255" key="2">
    <source>
        <dbReference type="PROSITE-ProRule" id="PRU00433"/>
    </source>
</evidence>
<evidence type="ECO:0000305" key="3"/>
<organism>
    <name type="scientific">Pararhodospirillum photometricum</name>
    <name type="common">Rhodospirillum photometricum</name>
    <dbReference type="NCBI Taxonomy" id="1084"/>
    <lineage>
        <taxon>Bacteria</taxon>
        <taxon>Pseudomonadati</taxon>
        <taxon>Pseudomonadota</taxon>
        <taxon>Alphaproteobacteria</taxon>
        <taxon>Rhodospirillales</taxon>
        <taxon>Rhodospirillaceae</taxon>
        <taxon>Pararhodospirillum</taxon>
    </lineage>
</organism>
<proteinExistence type="evidence at protein level"/>
<keyword id="KW-0903">Direct protein sequencing</keyword>
<keyword id="KW-0249">Electron transport</keyword>
<keyword id="KW-0349">Heme</keyword>
<keyword id="KW-0408">Iron</keyword>
<keyword id="KW-0479">Metal-binding</keyword>
<keyword id="KW-0602">Photosynthesis</keyword>
<keyword id="KW-0813">Transport</keyword>
<protein>
    <recommendedName>
        <fullName>Cytochrome c2</fullName>
    </recommendedName>
</protein>
<feature type="chain" id="PRO_0000108345" description="Cytochrome c2">
    <location>
        <begin position="1"/>
        <end position="113"/>
    </location>
</feature>
<feature type="binding site" description="covalent" evidence="2">
    <location>
        <position position="15"/>
    </location>
    <ligand>
        <name>heme c</name>
        <dbReference type="ChEBI" id="CHEBI:61717"/>
    </ligand>
</feature>
<feature type="binding site" description="covalent" evidence="2">
    <location>
        <position position="18"/>
    </location>
    <ligand>
        <name>heme c</name>
        <dbReference type="ChEBI" id="CHEBI:61717"/>
    </ligand>
</feature>
<feature type="binding site" description="axial binding residue" evidence="2">
    <location>
        <position position="19"/>
    </location>
    <ligand>
        <name>heme c</name>
        <dbReference type="ChEBI" id="CHEBI:61717"/>
    </ligand>
    <ligandPart>
        <name>Fe</name>
        <dbReference type="ChEBI" id="CHEBI:18248"/>
    </ligandPart>
</feature>
<feature type="binding site" description="axial binding residue" evidence="2">
    <location>
        <position position="92"/>
    </location>
    <ligand>
        <name>heme c</name>
        <dbReference type="ChEBI" id="CHEBI:61717"/>
    </ligand>
    <ligandPart>
        <name>Fe</name>
        <dbReference type="ChEBI" id="CHEBI:18248"/>
    </ligandPart>
</feature>
<accession>P00093</accession>